<name>HDFR_SHIFL</name>
<gene>
    <name type="primary">hdfR</name>
    <name type="ordered locus">SF3839</name>
    <name type="ordered locus">S3921</name>
</gene>
<evidence type="ECO:0000250" key="1"/>
<evidence type="ECO:0000305" key="2"/>
<proteinExistence type="inferred from homology"/>
<reference key="1">
    <citation type="journal article" date="2002" name="Nucleic Acids Res.">
        <title>Genome sequence of Shigella flexneri 2a: insights into pathogenicity through comparison with genomes of Escherichia coli K12 and O157.</title>
        <authorList>
            <person name="Jin Q."/>
            <person name="Yuan Z."/>
            <person name="Xu J."/>
            <person name="Wang Y."/>
            <person name="Shen Y."/>
            <person name="Lu W."/>
            <person name="Wang J."/>
            <person name="Liu H."/>
            <person name="Yang J."/>
            <person name="Yang F."/>
            <person name="Zhang X."/>
            <person name="Zhang J."/>
            <person name="Yang G."/>
            <person name="Wu H."/>
            <person name="Qu D."/>
            <person name="Dong J."/>
            <person name="Sun L."/>
            <person name="Xue Y."/>
            <person name="Zhao A."/>
            <person name="Gao Y."/>
            <person name="Zhu J."/>
            <person name="Kan B."/>
            <person name="Ding K."/>
            <person name="Chen S."/>
            <person name="Cheng H."/>
            <person name="Yao Z."/>
            <person name="He B."/>
            <person name="Chen R."/>
            <person name="Ma D."/>
            <person name="Qiang B."/>
            <person name="Wen Y."/>
            <person name="Hou Y."/>
            <person name="Yu J."/>
        </authorList>
    </citation>
    <scope>NUCLEOTIDE SEQUENCE [LARGE SCALE GENOMIC DNA]</scope>
    <source>
        <strain>301 / Serotype 2a</strain>
    </source>
</reference>
<reference key="2">
    <citation type="journal article" date="2003" name="Infect. Immun.">
        <title>Complete genome sequence and comparative genomics of Shigella flexneri serotype 2a strain 2457T.</title>
        <authorList>
            <person name="Wei J."/>
            <person name="Goldberg M.B."/>
            <person name="Burland V."/>
            <person name="Venkatesan M.M."/>
            <person name="Deng W."/>
            <person name="Fournier G."/>
            <person name="Mayhew G.F."/>
            <person name="Plunkett G. III"/>
            <person name="Rose D.J."/>
            <person name="Darling A."/>
            <person name="Mau B."/>
            <person name="Perna N.T."/>
            <person name="Payne S.M."/>
            <person name="Runyen-Janecky L.J."/>
            <person name="Zhou S."/>
            <person name="Schwartz D.C."/>
            <person name="Blattner F.R."/>
        </authorList>
    </citation>
    <scope>NUCLEOTIDE SEQUENCE [LARGE SCALE GENOMIC DNA]</scope>
    <source>
        <strain>ATCC 700930 / 2457T / Serotype 2a</strain>
    </source>
</reference>
<comment type="function">
    <text evidence="1">Negatively regulates the transcription of the flagellar master operon flhDC by binding to the upstream region of the operon.</text>
</comment>
<comment type="similarity">
    <text evidence="2">Belongs to the LysR transcriptional regulatory family.</text>
</comment>
<accession>P0A8S0</accession>
<accession>P22788</accession>
<accession>P27826</accession>
<accession>Q9KHQ8</accession>
<organism>
    <name type="scientific">Shigella flexneri</name>
    <dbReference type="NCBI Taxonomy" id="623"/>
    <lineage>
        <taxon>Bacteria</taxon>
        <taxon>Pseudomonadati</taxon>
        <taxon>Pseudomonadota</taxon>
        <taxon>Gammaproteobacteria</taxon>
        <taxon>Enterobacterales</taxon>
        <taxon>Enterobacteriaceae</taxon>
        <taxon>Shigella</taxon>
    </lineage>
</organism>
<dbReference type="EMBL" id="AE005674">
    <property type="protein sequence ID" value="AAN45277.1"/>
    <property type="molecule type" value="Genomic_DNA"/>
</dbReference>
<dbReference type="EMBL" id="AE014073">
    <property type="protein sequence ID" value="AAP18920.1"/>
    <property type="molecule type" value="Genomic_DNA"/>
</dbReference>
<dbReference type="RefSeq" id="WP_000379245.1">
    <property type="nucleotide sequence ID" value="NZ_WPGW01000028.1"/>
</dbReference>
<dbReference type="SMR" id="P0A8S0"/>
<dbReference type="STRING" id="198214.SF3839"/>
<dbReference type="PaxDb" id="198214-SF3839"/>
<dbReference type="GeneID" id="93778187"/>
<dbReference type="KEGG" id="sfl:SF3839"/>
<dbReference type="KEGG" id="sfx:S3921"/>
<dbReference type="PATRIC" id="fig|198214.7.peg.4530"/>
<dbReference type="HOGENOM" id="CLU_039613_8_2_6"/>
<dbReference type="Proteomes" id="UP000001006">
    <property type="component" value="Chromosome"/>
</dbReference>
<dbReference type="Proteomes" id="UP000002673">
    <property type="component" value="Chromosome"/>
</dbReference>
<dbReference type="GO" id="GO:0003677">
    <property type="term" value="F:DNA binding"/>
    <property type="evidence" value="ECO:0007669"/>
    <property type="project" value="UniProtKB-KW"/>
</dbReference>
<dbReference type="GO" id="GO:0003700">
    <property type="term" value="F:DNA-binding transcription factor activity"/>
    <property type="evidence" value="ECO:0007669"/>
    <property type="project" value="UniProtKB-UniRule"/>
</dbReference>
<dbReference type="GO" id="GO:0045892">
    <property type="term" value="P:negative regulation of DNA-templated transcription"/>
    <property type="evidence" value="ECO:0007669"/>
    <property type="project" value="UniProtKB-UniRule"/>
</dbReference>
<dbReference type="FunFam" id="1.10.10.10:FF:000001">
    <property type="entry name" value="LysR family transcriptional regulator"/>
    <property type="match status" value="1"/>
</dbReference>
<dbReference type="Gene3D" id="3.40.190.10">
    <property type="entry name" value="Periplasmic binding protein-like II"/>
    <property type="match status" value="2"/>
</dbReference>
<dbReference type="Gene3D" id="1.10.10.10">
    <property type="entry name" value="Winged helix-like DNA-binding domain superfamily/Winged helix DNA-binding domain"/>
    <property type="match status" value="1"/>
</dbReference>
<dbReference type="HAMAP" id="MF_01233">
    <property type="entry name" value="HTH_type_HdfR"/>
    <property type="match status" value="1"/>
</dbReference>
<dbReference type="InterPro" id="IPR050176">
    <property type="entry name" value="LTTR"/>
</dbReference>
<dbReference type="InterPro" id="IPR005119">
    <property type="entry name" value="LysR_subst-bd"/>
</dbReference>
<dbReference type="InterPro" id="IPR020890">
    <property type="entry name" value="Tscrpt_reg_HTH_HdfR"/>
</dbReference>
<dbReference type="InterPro" id="IPR000847">
    <property type="entry name" value="Tscrpt_reg_HTH_LysR"/>
</dbReference>
<dbReference type="InterPro" id="IPR036388">
    <property type="entry name" value="WH-like_DNA-bd_sf"/>
</dbReference>
<dbReference type="InterPro" id="IPR036390">
    <property type="entry name" value="WH_DNA-bd_sf"/>
</dbReference>
<dbReference type="NCBIfam" id="NF002946">
    <property type="entry name" value="PRK03601.1"/>
    <property type="match status" value="1"/>
</dbReference>
<dbReference type="PANTHER" id="PTHR30579:SF8">
    <property type="entry name" value="HTH-TYPE TRANSCRIPTIONAL REGULATOR HDFR"/>
    <property type="match status" value="1"/>
</dbReference>
<dbReference type="PANTHER" id="PTHR30579">
    <property type="entry name" value="TRANSCRIPTIONAL REGULATOR"/>
    <property type="match status" value="1"/>
</dbReference>
<dbReference type="Pfam" id="PF00126">
    <property type="entry name" value="HTH_1"/>
    <property type="match status" value="1"/>
</dbReference>
<dbReference type="Pfam" id="PF03466">
    <property type="entry name" value="LysR_substrate"/>
    <property type="match status" value="1"/>
</dbReference>
<dbReference type="PRINTS" id="PR00039">
    <property type="entry name" value="HTHLYSR"/>
</dbReference>
<dbReference type="SUPFAM" id="SSF53850">
    <property type="entry name" value="Periplasmic binding protein-like II"/>
    <property type="match status" value="1"/>
</dbReference>
<dbReference type="SUPFAM" id="SSF46785">
    <property type="entry name" value="Winged helix' DNA-binding domain"/>
    <property type="match status" value="1"/>
</dbReference>
<dbReference type="PROSITE" id="PS50931">
    <property type="entry name" value="HTH_LYSR"/>
    <property type="match status" value="1"/>
</dbReference>
<keyword id="KW-0238">DNA-binding</keyword>
<keyword id="KW-1185">Reference proteome</keyword>
<keyword id="KW-0678">Repressor</keyword>
<keyword id="KW-0804">Transcription</keyword>
<keyword id="KW-0805">Transcription regulation</keyword>
<feature type="chain" id="PRO_0000105637" description="HTH-type transcriptional regulator HdfR">
    <location>
        <begin position="1"/>
        <end position="279"/>
    </location>
</feature>
<feature type="domain" description="HTH lysR-type">
    <location>
        <begin position="1"/>
        <end position="58"/>
    </location>
</feature>
<feature type="DNA-binding region" description="H-T-H motif" evidence="1">
    <location>
        <begin position="18"/>
        <end position="37"/>
    </location>
</feature>
<sequence>MDTELLKTFLEVSRTRHFGRAAESLYLTQSAVSFRIRQLENQLGVNLFTRHRNNIRLTAAGEKLLPYAETLMSTWQAARKEVAHTSRHNEFSIGASASLWECMLNQWLGRLYQNQDAHTGLQFEARIAQRQSLVKQLHERQLDLLITTEAPKMDEFSSQLLGYFTLALYTSAPSKLKGDLNYLRLEWGPDFQQHEAGLIGADEVPILTTSSAELAQQQIAMLNGCTWLPVSWARKKGGLHTVVDSTTLSRPLYAIWLQNSDKNALIRDLLKINVLDEVY</sequence>
<protein>
    <recommendedName>
        <fullName>HTH-type transcriptional regulator HdfR</fullName>
    </recommendedName>
    <alternativeName>
        <fullName>H-NS-dependent flhDC regulator</fullName>
    </alternativeName>
</protein>